<reference key="1">
    <citation type="journal article" date="2000" name="Int. J. Med. Microbiol.">
        <title>Genomics of Bordetella pertussis toxins.</title>
        <authorList>
            <person name="Antoine R."/>
            <person name="Raze D."/>
            <person name="Locht C."/>
        </authorList>
    </citation>
    <scope>NUCLEOTIDE SEQUENCE [GENOMIC DNA]</scope>
</reference>
<reference key="2">
    <citation type="journal article" date="2003" name="Nat. Genet.">
        <title>Comparative analysis of the genome sequences of Bordetella pertussis, Bordetella parapertussis and Bordetella bronchiseptica.</title>
        <authorList>
            <person name="Parkhill J."/>
            <person name="Sebaihia M."/>
            <person name="Preston A."/>
            <person name="Murphy L.D."/>
            <person name="Thomson N.R."/>
            <person name="Harris D.E."/>
            <person name="Holden M.T.G."/>
            <person name="Churcher C.M."/>
            <person name="Bentley S.D."/>
            <person name="Mungall K.L."/>
            <person name="Cerdeno-Tarraga A.-M."/>
            <person name="Temple L."/>
            <person name="James K.D."/>
            <person name="Harris B."/>
            <person name="Quail M.A."/>
            <person name="Achtman M."/>
            <person name="Atkin R."/>
            <person name="Baker S."/>
            <person name="Basham D."/>
            <person name="Bason N."/>
            <person name="Cherevach I."/>
            <person name="Chillingworth T."/>
            <person name="Collins M."/>
            <person name="Cronin A."/>
            <person name="Davis P."/>
            <person name="Doggett J."/>
            <person name="Feltwell T."/>
            <person name="Goble A."/>
            <person name="Hamlin N."/>
            <person name="Hauser H."/>
            <person name="Holroyd S."/>
            <person name="Jagels K."/>
            <person name="Leather S."/>
            <person name="Moule S."/>
            <person name="Norberczak H."/>
            <person name="O'Neil S."/>
            <person name="Ormond D."/>
            <person name="Price C."/>
            <person name="Rabbinowitsch E."/>
            <person name="Rutter S."/>
            <person name="Sanders M."/>
            <person name="Saunders D."/>
            <person name="Seeger K."/>
            <person name="Sharp S."/>
            <person name="Simmonds M."/>
            <person name="Skelton J."/>
            <person name="Squares R."/>
            <person name="Squares S."/>
            <person name="Stevens K."/>
            <person name="Unwin L."/>
            <person name="Whitehead S."/>
            <person name="Barrell B.G."/>
            <person name="Maskell D.J."/>
        </authorList>
    </citation>
    <scope>NUCLEOTIDE SEQUENCE [LARGE SCALE GENOMIC DNA]</scope>
    <source>
        <strain>Tohama I / ATCC BAA-589 / NCTC 13251</strain>
    </source>
</reference>
<reference key="3">
    <citation type="journal article" date="1986" name="Proc. Natl. Acad. Sci. U.S.A.">
        <title>Cloning and sequencing of the pertussis toxin genes: operon structure and gene duplication.</title>
        <authorList>
            <person name="Nicosia A."/>
            <person name="Perugini M."/>
            <person name="Franzini C."/>
            <person name="Casagli M.C."/>
            <person name="Borri M.G."/>
            <person name="Antoni G."/>
            <person name="Almoni M."/>
            <person name="Neri P."/>
            <person name="Ratti G."/>
            <person name="Rappuoli R."/>
        </authorList>
    </citation>
    <scope>NUCLEOTIDE SEQUENCE [GENOMIC DNA] OF 248-326</scope>
    <source>
        <strain>BP165</strain>
    </source>
</reference>
<gene>
    <name type="primary">bugT</name>
    <name type="ordered locus">BP3782</name>
</gene>
<feature type="signal peptide" evidence="1">
    <location>
        <begin position="1"/>
        <end position="25"/>
    </location>
</feature>
<feature type="chain" id="PRO_0000036199" description="Protein BugT">
    <location>
        <begin position="26"/>
        <end position="326"/>
    </location>
</feature>
<organism>
    <name type="scientific">Bordetella pertussis (strain Tohama I / ATCC BAA-589 / NCTC 13251)</name>
    <dbReference type="NCBI Taxonomy" id="257313"/>
    <lineage>
        <taxon>Bacteria</taxon>
        <taxon>Pseudomonadati</taxon>
        <taxon>Pseudomonadota</taxon>
        <taxon>Betaproteobacteria</taxon>
        <taxon>Burkholderiales</taxon>
        <taxon>Alcaligenaceae</taxon>
        <taxon>Bordetella</taxon>
    </lineage>
</organism>
<dbReference type="EMBL" id="AY234862">
    <property type="protein sequence ID" value="AAO61652.1"/>
    <property type="molecule type" value="Genomic_DNA"/>
</dbReference>
<dbReference type="EMBL" id="BX640422">
    <property type="protein sequence ID" value="CAE44037.1"/>
    <property type="molecule type" value="Genomic_DNA"/>
</dbReference>
<dbReference type="EMBL" id="M14378">
    <property type="protein sequence ID" value="AAA83979.1"/>
    <property type="molecule type" value="Genomic_DNA"/>
</dbReference>
<dbReference type="RefSeq" id="NP_882281.1">
    <property type="nucleotide sequence ID" value="NC_002929.2"/>
</dbReference>
<dbReference type="RefSeq" id="WP_010931647.1">
    <property type="nucleotide sequence ID" value="NZ_CP039022.1"/>
</dbReference>
<dbReference type="SMR" id="Q45389"/>
<dbReference type="STRING" id="257313.BP3782"/>
<dbReference type="PaxDb" id="257313-BP3782"/>
<dbReference type="KEGG" id="bpe:BP3782"/>
<dbReference type="PATRIC" id="fig|257313.5.peg.4086"/>
<dbReference type="eggNOG" id="COG3181">
    <property type="taxonomic scope" value="Bacteria"/>
</dbReference>
<dbReference type="HOGENOM" id="CLU_045683_0_1_4"/>
<dbReference type="Proteomes" id="UP000002676">
    <property type="component" value="Chromosome"/>
</dbReference>
<dbReference type="GO" id="GO:0042597">
    <property type="term" value="C:periplasmic space"/>
    <property type="evidence" value="ECO:0007669"/>
    <property type="project" value="UniProtKB-SubCell"/>
</dbReference>
<dbReference type="CDD" id="cd07012">
    <property type="entry name" value="PBP2_Bug_TTT"/>
    <property type="match status" value="1"/>
</dbReference>
<dbReference type="Gene3D" id="3.40.190.150">
    <property type="entry name" value="Bordetella uptake gene, domain 1"/>
    <property type="match status" value="1"/>
</dbReference>
<dbReference type="Gene3D" id="3.40.190.10">
    <property type="entry name" value="Periplasmic binding protein-like II"/>
    <property type="match status" value="1"/>
</dbReference>
<dbReference type="InterPro" id="IPR005064">
    <property type="entry name" value="BUG"/>
</dbReference>
<dbReference type="InterPro" id="IPR042100">
    <property type="entry name" value="Bug_dom1"/>
</dbReference>
<dbReference type="PANTHER" id="PTHR42928:SF5">
    <property type="entry name" value="BLR1237 PROTEIN"/>
    <property type="match status" value="1"/>
</dbReference>
<dbReference type="PANTHER" id="PTHR42928">
    <property type="entry name" value="TRICARBOXYLATE-BINDING PROTEIN"/>
    <property type="match status" value="1"/>
</dbReference>
<dbReference type="Pfam" id="PF03401">
    <property type="entry name" value="TctC"/>
    <property type="match status" value="1"/>
</dbReference>
<dbReference type="PIRSF" id="PIRSF017082">
    <property type="entry name" value="YflP"/>
    <property type="match status" value="1"/>
</dbReference>
<dbReference type="SUPFAM" id="SSF53850">
    <property type="entry name" value="Periplasmic binding protein-like II"/>
    <property type="match status" value="1"/>
</dbReference>
<protein>
    <recommendedName>
        <fullName>Protein BugT</fullName>
    </recommendedName>
</protein>
<accession>Q45389</accession>
<accession>Q847Y2</accession>
<comment type="subcellular location">
    <subcellularLocation>
        <location evidence="2">Periplasm</location>
    </subcellularLocation>
</comment>
<comment type="similarity">
    <text evidence="2">Belongs to the UPF0065 (bug) family.</text>
</comment>
<name>BUGT_BORPE</name>
<evidence type="ECO:0000255" key="1"/>
<evidence type="ECO:0000305" key="2"/>
<proteinExistence type="inferred from homology"/>
<keyword id="KW-0574">Periplasm</keyword>
<keyword id="KW-1185">Reference proteome</keyword>
<keyword id="KW-0732">Signal</keyword>
<sequence>MNMTRLLAVIGIFIATAGIAAPVSADTYPARPIQMIVPFPPGGSTDVMARVLARTLQDSLGQPVVVQNRAGAGGVIGTDATAKSAADGYTLLLSSSSAPLAVGLSLMPSIPYKVLEDLVPVSMVGDVPLVLVTNPKLKLDSLDALIAQCKARPGEVAFALNALGSQAHLLTELFQLRTGAAINMIPYKGSGPAVVDLLGGVVAADIENMPAVLEHIRSGNLRALAILSSDRSTHFPAVPTMAELGYPEFVASPWFAVMAPKGTDPKIIVLLNRHINEALQSKAVVEAFAAQGATPVIATPDQTRGFIADEIQRWAGVVRETGAKLK</sequence>